<comment type="similarity">
    <text evidence="1">Belongs to the CinA family.</text>
</comment>
<sequence length="422" mass="44005">MSARAGIVVTGTEVLTGRVQDLNGPWLADRLLELGVELSHITLCGDRPADIEAQLRFLADQGVDLIITSGGLGPTADDMTVEVVSRFCGRELELDPGLETRIGEIVTRLMARFPDVDPAAVIAANRKQAFVPDGAVILDPVGTAPGVVVPGTPTVVVLPGPPRELQPMWQAAVAADAVQTAIADRVSYRQDTVRMFGLPESGLAETLREAEGSVAGFDRLEITTCLRRGELEIVTRYEPRDADAYDGLLNMLRDKHSRELFSEDGALVDDQVAALLAGRTIATAESCTAGLLAARLTDRAGSSAYVAGGVVSYSNDAKTDLLGVDAELIAAHGAVSEPVAEAMAAGALQRFGADTAVAITGIAGPGGGTPAKPVGTVCFSVALADGTFLTRTSQLPGNRSDVRERSTTVAMHLLRRALSGGG</sequence>
<dbReference type="EMBL" id="CP000656">
    <property type="protein sequence ID" value="ABP45757.1"/>
    <property type="molecule type" value="Genomic_DNA"/>
</dbReference>
<dbReference type="SMR" id="A4TAK5"/>
<dbReference type="STRING" id="350054.Mflv_3280"/>
<dbReference type="KEGG" id="mgi:Mflv_3280"/>
<dbReference type="eggNOG" id="COG1058">
    <property type="taxonomic scope" value="Bacteria"/>
</dbReference>
<dbReference type="eggNOG" id="COG1546">
    <property type="taxonomic scope" value="Bacteria"/>
</dbReference>
<dbReference type="HOGENOM" id="CLU_030805_9_2_11"/>
<dbReference type="OrthoDB" id="1253990at2"/>
<dbReference type="CDD" id="cd00885">
    <property type="entry name" value="cinA"/>
    <property type="match status" value="1"/>
</dbReference>
<dbReference type="Gene3D" id="3.90.950.20">
    <property type="entry name" value="CinA-like"/>
    <property type="match status" value="1"/>
</dbReference>
<dbReference type="Gene3D" id="3.40.980.10">
    <property type="entry name" value="MoaB/Mog-like domain"/>
    <property type="match status" value="1"/>
</dbReference>
<dbReference type="HAMAP" id="MF_00226_B">
    <property type="entry name" value="CinA_B"/>
    <property type="match status" value="1"/>
</dbReference>
<dbReference type="InterPro" id="IPR050101">
    <property type="entry name" value="CinA"/>
</dbReference>
<dbReference type="InterPro" id="IPR036653">
    <property type="entry name" value="CinA-like_C"/>
</dbReference>
<dbReference type="InterPro" id="IPR008136">
    <property type="entry name" value="CinA_C"/>
</dbReference>
<dbReference type="InterPro" id="IPR008135">
    <property type="entry name" value="Competence-induced_CinA"/>
</dbReference>
<dbReference type="InterPro" id="IPR036425">
    <property type="entry name" value="MoaB/Mog-like_dom_sf"/>
</dbReference>
<dbReference type="InterPro" id="IPR001453">
    <property type="entry name" value="MoaB/Mog_dom"/>
</dbReference>
<dbReference type="NCBIfam" id="TIGR00199">
    <property type="entry name" value="PncC_domain"/>
    <property type="match status" value="1"/>
</dbReference>
<dbReference type="NCBIfam" id="NF001813">
    <property type="entry name" value="PRK00549.1"/>
    <property type="match status" value="1"/>
</dbReference>
<dbReference type="PANTHER" id="PTHR13939">
    <property type="entry name" value="NICOTINAMIDE-NUCLEOTIDE AMIDOHYDROLASE PNCC"/>
    <property type="match status" value="1"/>
</dbReference>
<dbReference type="PANTHER" id="PTHR13939:SF0">
    <property type="entry name" value="NMN AMIDOHYDROLASE-LIKE PROTEIN YFAY"/>
    <property type="match status" value="1"/>
</dbReference>
<dbReference type="Pfam" id="PF02464">
    <property type="entry name" value="CinA"/>
    <property type="match status" value="1"/>
</dbReference>
<dbReference type="Pfam" id="PF00994">
    <property type="entry name" value="MoCF_biosynth"/>
    <property type="match status" value="1"/>
</dbReference>
<dbReference type="PIRSF" id="PIRSF006728">
    <property type="entry name" value="CinA"/>
    <property type="match status" value="1"/>
</dbReference>
<dbReference type="SMART" id="SM00852">
    <property type="entry name" value="MoCF_biosynth"/>
    <property type="match status" value="1"/>
</dbReference>
<dbReference type="SUPFAM" id="SSF142433">
    <property type="entry name" value="CinA-like"/>
    <property type="match status" value="1"/>
</dbReference>
<dbReference type="SUPFAM" id="SSF53218">
    <property type="entry name" value="Molybdenum cofactor biosynthesis proteins"/>
    <property type="match status" value="1"/>
</dbReference>
<protein>
    <recommendedName>
        <fullName evidence="1">CinA-like protein</fullName>
    </recommendedName>
</protein>
<feature type="chain" id="PRO_0000336507" description="CinA-like protein">
    <location>
        <begin position="1"/>
        <end position="422"/>
    </location>
</feature>
<organism>
    <name type="scientific">Mycolicibacterium gilvum (strain PYR-GCK)</name>
    <name type="common">Mycobacterium gilvum (strain PYR-GCK)</name>
    <dbReference type="NCBI Taxonomy" id="350054"/>
    <lineage>
        <taxon>Bacteria</taxon>
        <taxon>Bacillati</taxon>
        <taxon>Actinomycetota</taxon>
        <taxon>Actinomycetes</taxon>
        <taxon>Mycobacteriales</taxon>
        <taxon>Mycobacteriaceae</taxon>
        <taxon>Mycolicibacterium</taxon>
    </lineage>
</organism>
<accession>A4TAK5</accession>
<reference key="1">
    <citation type="submission" date="2007-04" db="EMBL/GenBank/DDBJ databases">
        <title>Complete sequence of chromosome of Mycobacterium gilvum PYR-GCK.</title>
        <authorList>
            <consortium name="US DOE Joint Genome Institute"/>
            <person name="Copeland A."/>
            <person name="Lucas S."/>
            <person name="Lapidus A."/>
            <person name="Barry K."/>
            <person name="Detter J.C."/>
            <person name="Glavina del Rio T."/>
            <person name="Hammon N."/>
            <person name="Israni S."/>
            <person name="Dalin E."/>
            <person name="Tice H."/>
            <person name="Pitluck S."/>
            <person name="Chain P."/>
            <person name="Malfatti S."/>
            <person name="Shin M."/>
            <person name="Vergez L."/>
            <person name="Schmutz J."/>
            <person name="Larimer F."/>
            <person name="Land M."/>
            <person name="Hauser L."/>
            <person name="Kyrpides N."/>
            <person name="Mikhailova N."/>
            <person name="Miller C."/>
            <person name="Richardson P."/>
        </authorList>
    </citation>
    <scope>NUCLEOTIDE SEQUENCE [LARGE SCALE GENOMIC DNA]</scope>
    <source>
        <strain>PYR-GCK</strain>
    </source>
</reference>
<gene>
    <name type="ordered locus">Mflv_3280</name>
</gene>
<name>CINAL_MYCGI</name>
<evidence type="ECO:0000255" key="1">
    <source>
        <dbReference type="HAMAP-Rule" id="MF_00226"/>
    </source>
</evidence>
<proteinExistence type="inferred from homology"/>